<gene>
    <name type="ORF">pc1</name>
</gene>
<dbReference type="EC" id="2.7.7.48" evidence="3"/>
<dbReference type="EC" id="3.1.-.-" evidence="8"/>
<dbReference type="EMBL" id="D31879">
    <property type="protein sequence ID" value="BAA06677.1"/>
    <property type="molecule type" value="Genomic_RNA"/>
</dbReference>
<dbReference type="SMR" id="Q85431"/>
<dbReference type="KEGG" id="vg:962685"/>
<dbReference type="Proteomes" id="UP000006677">
    <property type="component" value="Genome"/>
</dbReference>
<dbReference type="GO" id="GO:0044165">
    <property type="term" value="C:host cell endoplasmic reticulum"/>
    <property type="evidence" value="ECO:0007669"/>
    <property type="project" value="UniProtKB-SubCell"/>
</dbReference>
<dbReference type="GO" id="GO:0044172">
    <property type="term" value="C:host cell endoplasmic reticulum-Golgi intermediate compartment"/>
    <property type="evidence" value="ECO:0007669"/>
    <property type="project" value="UniProtKB-SubCell"/>
</dbReference>
<dbReference type="GO" id="GO:0044177">
    <property type="term" value="C:host cell Golgi apparatus"/>
    <property type="evidence" value="ECO:0007669"/>
    <property type="project" value="UniProtKB-SubCell"/>
</dbReference>
<dbReference type="GO" id="GO:0044423">
    <property type="term" value="C:virion component"/>
    <property type="evidence" value="ECO:0007669"/>
    <property type="project" value="UniProtKB-KW"/>
</dbReference>
<dbReference type="GO" id="GO:0016787">
    <property type="term" value="F:hydrolase activity"/>
    <property type="evidence" value="ECO:0007669"/>
    <property type="project" value="UniProtKB-KW"/>
</dbReference>
<dbReference type="GO" id="GO:0046872">
    <property type="term" value="F:metal ion binding"/>
    <property type="evidence" value="ECO:0007669"/>
    <property type="project" value="UniProtKB-KW"/>
</dbReference>
<dbReference type="GO" id="GO:0000166">
    <property type="term" value="F:nucleotide binding"/>
    <property type="evidence" value="ECO:0007669"/>
    <property type="project" value="UniProtKB-KW"/>
</dbReference>
<dbReference type="GO" id="GO:0003968">
    <property type="term" value="F:RNA-directed RNA polymerase activity"/>
    <property type="evidence" value="ECO:0007669"/>
    <property type="project" value="UniProtKB-KW"/>
</dbReference>
<dbReference type="GO" id="GO:0006351">
    <property type="term" value="P:DNA-templated transcription"/>
    <property type="evidence" value="ECO:0007669"/>
    <property type="project" value="InterPro"/>
</dbReference>
<dbReference type="GO" id="GO:0039694">
    <property type="term" value="P:viral RNA genome replication"/>
    <property type="evidence" value="ECO:0007669"/>
    <property type="project" value="InterPro"/>
</dbReference>
<dbReference type="Gene3D" id="3.90.70.80">
    <property type="match status" value="1"/>
</dbReference>
<dbReference type="InterPro" id="IPR022531">
    <property type="entry name" value="L_PA-C-like"/>
</dbReference>
<dbReference type="InterPro" id="IPR029124">
    <property type="entry name" value="L_protein_N"/>
</dbReference>
<dbReference type="InterPro" id="IPR003323">
    <property type="entry name" value="OTU_dom"/>
</dbReference>
<dbReference type="InterPro" id="IPR007099">
    <property type="entry name" value="RNA-dir_pol_NSvirus"/>
</dbReference>
<dbReference type="InterPro" id="IPR015842">
    <property type="entry name" value="RNA-dir_pol_tenuivirus"/>
</dbReference>
<dbReference type="InterPro" id="IPR007322">
    <property type="entry name" value="RNA_pol_bunyavir"/>
</dbReference>
<dbReference type="Pfam" id="PF04196">
    <property type="entry name" value="Bunya_RdRp"/>
    <property type="match status" value="1"/>
</dbReference>
<dbReference type="Pfam" id="PF12603">
    <property type="entry name" value="L_PA-C-like"/>
    <property type="match status" value="1"/>
</dbReference>
<dbReference type="Pfam" id="PF15518">
    <property type="entry name" value="L_protein_N"/>
    <property type="match status" value="1"/>
</dbReference>
<dbReference type="PIRSF" id="PIRSF036873">
    <property type="entry name" value="L_TenuV"/>
    <property type="match status" value="1"/>
</dbReference>
<dbReference type="PROSITE" id="PS50802">
    <property type="entry name" value="OTU"/>
    <property type="match status" value="1"/>
</dbReference>
<dbReference type="PROSITE" id="PS50525">
    <property type="entry name" value="RDRP_SSRNA_NEG_SEG"/>
    <property type="match status" value="1"/>
</dbReference>
<name>L_RSVT</name>
<reference key="1">
    <citation type="journal article" date="1994" name="J. Gen. Virol.">
        <title>Nucleotide sequence of RNA 1, the largest genomic segment of rice stripe virus, the prototype of the tenuiviruses.</title>
        <authorList>
            <person name="Toriyama S."/>
            <person name="Takahashi M."/>
            <person name="Sano Y."/>
            <person name="Shimizu T."/>
        </authorList>
    </citation>
    <scope>NUCLEOTIDE SEQUENCE [GENOMIC RNA]</scope>
</reference>
<reference key="2">
    <citation type="journal article" date="2017" name="Crit. Rev. Microbiol.">
        <title>Bunyaviridae RdRps: structure, motifs, and RNA synthesis machinery.</title>
        <authorList>
            <person name="Amroun A."/>
            <person name="Priet S."/>
            <person name="de Lamballerie X."/>
            <person name="Querat G."/>
        </authorList>
    </citation>
    <scope>REVIEW</scope>
</reference>
<reference key="3">
    <citation type="journal article" date="2019" name="Virus Res.">
        <title>Characterization of an endonuclease in rice stripe tenuivirus Pc1 in vitro.</title>
        <authorList>
            <person name="Zhao S."/>
            <person name="Xu G."/>
            <person name="He G."/>
            <person name="Peng Y."/>
            <person name="Liang C."/>
        </authorList>
    </citation>
    <scope>FUNCTION</scope>
    <scope>DOMAIN</scope>
    <scope>MUTAGENESIS OF HIS-535; ASP-547; ASP-567; GLU-585; THR-587 AND LYS-604</scope>
    <scope>CATALYTIC ACTIVITY</scope>
</reference>
<reference key="4">
    <citation type="journal article" date="2020" name="Trends Microbiol.">
        <title>The Cap-Snatching Mechanism of Bunyaviruses.</title>
        <authorList>
            <person name="Olschewski S."/>
            <person name="Cusack S."/>
            <person name="Rosenthal M."/>
        </authorList>
    </citation>
    <scope>REVIEW</scope>
</reference>
<protein>
    <recommendedName>
        <fullName>RNA-directed RNA polymerase L</fullName>
        <shortName>Protein L</shortName>
        <ecNumber evidence="3">2.7.7.48</ecNumber>
    </recommendedName>
    <alternativeName>
        <fullName>Large structural protein</fullName>
    </alternativeName>
    <alternativeName>
        <fullName>Replicase</fullName>
    </alternativeName>
    <alternativeName>
        <fullName>Transcriptase</fullName>
    </alternativeName>
    <domain>
        <recommendedName>
            <fullName>cap-snatching endonuclease</fullName>
            <ecNumber evidence="8">3.1.-.-</ecNumber>
        </recommendedName>
    </domain>
</protein>
<evidence type="ECO:0000250" key="1">
    <source>
        <dbReference type="UniProtKB" id="A2SZS3"/>
    </source>
</evidence>
<evidence type="ECO:0000250" key="2">
    <source>
        <dbReference type="UniProtKB" id="A5HC98"/>
    </source>
</evidence>
<evidence type="ECO:0000250" key="3">
    <source>
        <dbReference type="UniProtKB" id="I0DF35"/>
    </source>
</evidence>
<evidence type="ECO:0000250" key="4">
    <source>
        <dbReference type="UniProtKB" id="J3TRD1"/>
    </source>
</evidence>
<evidence type="ECO:0000250" key="5">
    <source>
        <dbReference type="UniProtKB" id="P20470"/>
    </source>
</evidence>
<evidence type="ECO:0000250" key="6">
    <source>
        <dbReference type="UniProtKB" id="P27316"/>
    </source>
</evidence>
<evidence type="ECO:0000255" key="7">
    <source>
        <dbReference type="PROSITE-ProRule" id="PRU00539"/>
    </source>
</evidence>
<evidence type="ECO:0000269" key="8">
    <source>
    </source>
</evidence>
<evidence type="ECO:0000303" key="9">
    <source>
    </source>
</evidence>
<evidence type="ECO:0000305" key="10"/>
<feature type="chain" id="PRO_0000403929" description="RNA-directed RNA polymerase L">
    <location>
        <begin position="1"/>
        <end position="2919"/>
    </location>
</feature>
<feature type="domain" description="RdRp catalytic" evidence="7">
    <location>
        <begin position="1472"/>
        <end position="1671"/>
    </location>
</feature>
<feature type="region of interest" description="Endonuclease" evidence="2">
    <location>
        <begin position="86"/>
        <end position="675"/>
    </location>
</feature>
<feature type="region of interest" description="Cap-binding" evidence="2">
    <location>
        <begin position="2494"/>
        <end position="2632"/>
    </location>
</feature>
<feature type="active site" description="For endonuclease activity" evidence="3">
    <location>
        <position position="604"/>
    </location>
</feature>
<feature type="binding site" evidence="2">
    <location>
        <position position="535"/>
    </location>
    <ligand>
        <name>Mn(2+)</name>
        <dbReference type="ChEBI" id="CHEBI:29035"/>
        <label>1</label>
    </ligand>
</feature>
<feature type="binding site" evidence="2">
    <location>
        <position position="567"/>
    </location>
    <ligand>
        <name>Mn(2+)</name>
        <dbReference type="ChEBI" id="CHEBI:29035"/>
        <label>1</label>
    </ligand>
</feature>
<feature type="binding site" evidence="2">
    <location>
        <position position="567"/>
    </location>
    <ligand>
        <name>Mn(2+)</name>
        <dbReference type="ChEBI" id="CHEBI:29035"/>
        <label>2</label>
    </ligand>
</feature>
<feature type="binding site" evidence="2">
    <location>
        <position position="585"/>
    </location>
    <ligand>
        <name>Mn(2+)</name>
        <dbReference type="ChEBI" id="CHEBI:29035"/>
        <label>1</label>
    </ligand>
</feature>
<feature type="binding site" evidence="3">
    <location>
        <position position="1636"/>
    </location>
    <ligand>
        <name>Mg(2+)</name>
        <dbReference type="ChEBI" id="CHEBI:18420"/>
        <note>catalytic; for RdRp activity</note>
    </ligand>
</feature>
<feature type="mutagenesis site" description="Reduced endonuclease activity." evidence="8">
    <original>H</original>
    <variation>A</variation>
    <location>
        <position position="535"/>
    </location>
</feature>
<feature type="mutagenesis site" description="Complete loss of endonuclease activity." evidence="8">
    <original>D</original>
    <variation>A</variation>
    <location>
        <position position="547"/>
    </location>
</feature>
<feature type="mutagenesis site" description="Complete loss of endonuclease activity." evidence="8">
    <original>D</original>
    <variation>A</variation>
    <location>
        <position position="567"/>
    </location>
</feature>
<feature type="mutagenesis site" description="Complete loss of endonuclease activity." evidence="8">
    <original>E</original>
    <variation>A</variation>
    <location>
        <position position="585"/>
    </location>
</feature>
<feature type="mutagenesis site" description="No effect on endonuclease activity." evidence="8">
    <original>T</original>
    <variation>A</variation>
    <location>
        <position position="587"/>
    </location>
</feature>
<feature type="mutagenesis site" description="Complete loss of endonuclease activity." evidence="8">
    <original>K</original>
    <variation>A</variation>
    <location>
        <position position="604"/>
    </location>
</feature>
<proteinExistence type="evidence at protein level"/>
<sequence length="2919" mass="336877">MTTPPLVIPLHVHGRSYELLAGYHEVDWQEIEELEETDVRGDGFCLYHSILYSMGLSKENSRTTEFMIKLRSNPAICQLDQEMQLSLMKQLDPNDSSAWGEDIAIGFIAIILRIKIIAYQTVDGKLFKTIYGAEFESTIRIRNYGNYHFKSLETDFDHKVKLRSKIEEFLRMPVEDCESISLWHASVYKPIVSDSLSGHKSFSNVDELIGSIISSMYKIMDNGDQCFLWSAMRMVARPSEKLYALAVFLGFNLKFYHVRKRAEKLTAKLESDHTNLGVKLIEVYEVSEPTRSTWVLKPGGSRITETRNFVIEEIIDNRRSLESLFVSSSEYPAELCSQKLSAIKDRIALMFGFINRTPENSGRELYINTYYLKRILQVERNVIRDSLRSQPAVGMIQIIRLPTAFGTYNPEVGTLLLAQTGLIYRLGTTTRVQMEVRRSPSVISRSHKITSFPETQKHNNNLYDYAPRTQETFYHPNAEIYEAVDVKTPSVITEIVDNHIVIKLNTDDKGWSVSDSIKQDFVYRKRLMDAKNIVHDFVFDILSTETDKSFKGADLSIGGISDNWSPDVIISRESDPQYEDIVVYEFTTRSTESIESLLRSVEVKSLRYKEAIQERAITLKKRISYYTICVSLDAVATNLLSLPADVCRELIIRLRVANQVKIQLADNDINLDSATLLAPDIYRIKEMFRESFPNNKFIHPITKEMYEHFVNPMISGEKDYVANLKSIIDKETRDEQRKNLESLKVVDGKKYTERKAETALNEMSQAEEHYRSYFENDNFRSTLKAPVQLPLIIPDVSSQDNQFSNKELSDRIRKKPIDHPIYNIWDQAVNKRNCSIALGHLDELEISMLEGQVAKKVEESYKKDRSQYNRTTLLTNMKEDIYLAERGINAKKRLEEPDVKFYRDQSKRPFHPFVSETRDIEQFTQKECLELNEESGHCSLINVEDLVLSALELHEVGDLEHLWNNIKAHSKTKFALYAKFISDLATELAISLSQNCKEDTYVVKKLRDFSCYVLIKPVNLKSNVFFSLYIPSNIYKSHNTTFKTLIGSPESGYMTDFVSANVSKLVNWVRCEAMMLAQRGFWREFYAVAPSIEEQDGMAEPDSVCQMMSWTLLILLNDKHQLEEMITVSRFVHMEGFVTFPAWPKPYKMFDKLSVTPRSRLECLVIKRLIMLMKHYSENPIKFMIEDEKKKWFGFKNMFLLDCNGKLADLSDQDQMLNLFYLGYLKNKDEEVEDNGMGQLLTKILGFESAMPKTRDFLGMKDPEYGTIKKHEFSISYVKDLCDKFLDRLKKTHGIKDPITYLGDKIAKFLSTQFIETMASLKASSNFSEDYYLYTPSRRLKNQEQSRSKHVIDAGGNISASVKGKLYHRSKVIEKLTTLIKDETPGKELKIVVDLLPKAMEVLNKNECMHICIFKKNQHGGLREIYVLNIFERIMQKTVEDFSRAILECCPSETMTSPKNKFRIPELHNMEARKTLKNEYMTISTSDDASKWNQGHYVSKFMCMLLRLTPTYYHGFLVQALQLWHHKKIFLGDQLLQLFNQNAMLNTMDTTLMKVFQAYKGEIQVPWMKAGRSYIETETGMMQGILHYTSSLFHAIFLDQLAEECRRDINRAIKTINNKENEKVSCIVNNMESSDDSSFIISIPNFKENEAAQLYLLCVVNSWFRKKEKLGTYLGIYKSPKSTTQTLFVMEFNSEFFFSGDVHRPTFRWVNAAVLIGEQETLSGIQEELSNTLKDVIEGGGTYALTFIVQVAQAMIHYRMLGSSASSVWPAYETLLKNSYDPALGFFLMDNPKCAGLLGFNYNVWIACTTTPLGEKYHEMIQEEMKAESQSLKSVTEDTINTGLVSRTTMVGFGNKKRWMKLMTTLNLSADVYEKIEEEPRVYFFHAATAEQIIQKIAIKMKSPGVIQSLSKGNMLARKIASSVFFISRHIVFTMSAYYDADPETRKTSLLKELINSSKIPQRHDYLQEPHTLKPTKVEVDEDSWEFKSAKEECVRVLKQRIKIHTGREERSISLLFENMAKSMIGRCTDQYDVRENVSILACALKMNYSIFKKDAAPNRYLLDEKNLVYPLIGKEVSVYVKSDKVHIEISEKKERLSTKLFNIDKMKDIEETLSLLFPSYGDYLSLKETIDQVTFQSAIHKVNERRRVRADVHLTGTEGFSKLPMYTAAVWAWFDVKTIPAHDSIYRTIWKVYKEQYSWLSDTLKETVEKGPFKTVQGVVNFISRAGVRSRVVHLVGSFGKNVRGSINLVTAIKDNFSNGLVFKGNIFDIKAKKTRESLDNYLSICTTLSQAPITKHDKNQILRSLFVSGPRIQYVSSQFGSRRNRMSILQEVVADDPTLHWPDQDTSQKQLEDKFRELAHKELPFLTEKVFHDYLEKIEQLMKENTHLGGRDVDASKTPYVLARANDIEIHCYELWREYDEDEDEAYQAYCSEVEAAMDQEKLNALIERYHVDPKANWIQMLMNGEIETVEELNKLDKGFESHRLALVERIRVGKLGILGSYTKCQQRIEELDGEGNKTHRYTGEGIWRGSFDDSDVCIVVQDLKKTRESYLKCVVFSKVSDYKVLMGHLKTWCREHHISNDEFPTCTQKELLSYGVTKSSVLLYKMNGMKMLRNMEKGIPLYWNPSLSTRSQTYINWLAVDITDHSLRLRNRTVENGRVVNQTIMVVPLYKTDVQIFKTSPVDLEQDVQNDRLKLLSVTKAGELRWLQDWIMWRSSAVDDLNILNQVRRNKAARDHFNAKPEFKKWIKELWDYALDTTLINKKVFITTQGSESQSTVSSGDSDSAVAPLTDEAVDEIHDLLDKELEKGTLKQIIHDATIDAQLDIPAIESFLAEEMEVFKSSLAKSHPLLLNYVRYMIQEIGVTNFRSLIDSFNQKDPLKSVSLSILDLKEVFKFVYQDINDAYFVKQEEDHKFDF</sequence>
<organismHost>
    <name type="scientific">Avena sativa</name>
    <name type="common">Oat</name>
    <dbReference type="NCBI Taxonomy" id="4498"/>
</organismHost>
<organismHost>
    <name type="scientific">Digitaria</name>
    <dbReference type="NCBI Taxonomy" id="66017"/>
</organismHost>
<organismHost>
    <name type="scientific">Eragrostis</name>
    <dbReference type="NCBI Taxonomy" id="38413"/>
</organismHost>
<organismHost>
    <name type="scientific">Hordeum vulgare</name>
    <name type="common">Barley</name>
    <dbReference type="NCBI Taxonomy" id="4513"/>
</organismHost>
<organismHost>
    <name type="scientific">Oryza sativa</name>
    <name type="common">Rice</name>
    <dbReference type="NCBI Taxonomy" id="4530"/>
</organismHost>
<organismHost>
    <name type="scientific">Setaria italica</name>
    <name type="common">Foxtail millet</name>
    <name type="synonym">Panicum italicum</name>
    <dbReference type="NCBI Taxonomy" id="4555"/>
</organismHost>
<organismHost>
    <name type="scientific">Setaria viridis</name>
    <name type="common">Green bristlegrass</name>
    <name type="synonym">Setaria italica subsp. viridis</name>
    <dbReference type="NCBI Taxonomy" id="4556"/>
</organismHost>
<organismHost>
    <name type="scientific">Triticum aestivum</name>
    <name type="common">Wheat</name>
    <dbReference type="NCBI Taxonomy" id="4565"/>
</organismHost>
<organismHost>
    <name type="scientific">Zea mays</name>
    <name type="common">Maize</name>
    <dbReference type="NCBI Taxonomy" id="4577"/>
</organismHost>
<comment type="function">
    <text evidence="2 3 4 6">RNA-dependent RNA polymerase, which is responsible for the replication and transcription of the viral RNA genome using antigenomic RNA as an intermediate (By similarity). During transcription, synthesizes subgenomic RNAs and assures their capping by a cap-snatching mechanism, which involves the endonuclease activity cleaving the host capped pre-mRNAs (By similarity). These short capped RNAs are then used as primers for viral transcription. The 3'-end of subgenomic mRNAs molecules are not polyadenylated. During replication, the polymerase binds the 5' and 3' vRNA extremities at distinct sites (By similarity). In turn, significant conformational changes occur in the polymerase and in vRNA to initiate active RNA synthesis. As a consequence of the use of the same enzyme for both transcription and replication, these mechanisms need to be well coordinated (By similarity).</text>
</comment>
<comment type="catalytic activity">
    <reaction evidence="7">
        <text>RNA(n) + a ribonucleoside 5'-triphosphate = RNA(n+1) + diphosphate</text>
        <dbReference type="Rhea" id="RHEA:21248"/>
        <dbReference type="Rhea" id="RHEA-COMP:14527"/>
        <dbReference type="Rhea" id="RHEA-COMP:17342"/>
        <dbReference type="ChEBI" id="CHEBI:33019"/>
        <dbReference type="ChEBI" id="CHEBI:61557"/>
        <dbReference type="ChEBI" id="CHEBI:140395"/>
        <dbReference type="EC" id="2.7.7.48"/>
    </reaction>
</comment>
<comment type="cofactor">
    <cofactor evidence="8">
        <name>Mn(2+)</name>
        <dbReference type="ChEBI" id="CHEBI:29035"/>
    </cofactor>
    <text evidence="6 8">For endonuclease activity. Binds 2 Mn(2+) ions in the active site (By similarity). The divalent metal ions are crucial for catalytic activity (PubMed:30439393).</text>
</comment>
<comment type="cofactor">
    <cofactor evidence="6">
        <name>Mg(2+)</name>
        <dbReference type="ChEBI" id="CHEBI:18420"/>
    </cofactor>
    <cofactor evidence="6">
        <name>Mn(2+)</name>
        <dbReference type="ChEBI" id="CHEBI:29035"/>
    </cofactor>
    <text evidence="6">For polymerase activity. Initiation activity is stronger in the presence of Mn(2+) than in the presence of Mg(2+).</text>
</comment>
<comment type="subunit">
    <text evidence="6">Homomultimer. Interacts with glycoprotein N; this interaction allows efficient polymerase packaging into virus particles. Interacts with nucleoprotein N.</text>
</comment>
<comment type="subcellular location">
    <subcellularLocation>
        <location evidence="3">Host Golgi apparatus</location>
    </subcellularLocation>
    <subcellularLocation>
        <location evidence="3">Host endoplasmic reticulum</location>
    </subcellularLocation>
    <subcellularLocation>
        <location evidence="3">Host endoplasmic reticulum-Golgi intermediate compartment</location>
    </subcellularLocation>
    <subcellularLocation>
        <location evidence="5">Virion</location>
    </subcellularLocation>
</comment>
<comment type="domain">
    <text evidence="1 3 8">The N-terminus contains the endonuclease activity (endoN) (PubMed:30439393). The central region contains the RdRp activity (By similarity). The C-terminus contains the cap-binding region (By similarity).</text>
</comment>
<comment type="miscellaneous">
    <text evidence="9">Classified as His(+) endonuclease since it has a histidine upstream of the active site that coordinates the first cation.</text>
</comment>
<comment type="similarity">
    <text evidence="10">Belongs to the Bunyavirales RNA polymerase family.</text>
</comment>
<keyword id="KW-1038">Host endoplasmic reticulum</keyword>
<keyword id="KW-1040">Host Golgi apparatus</keyword>
<keyword id="KW-0378">Hydrolase</keyword>
<keyword id="KW-0460">Magnesium</keyword>
<keyword id="KW-0464">Manganese</keyword>
<keyword id="KW-0479">Metal-binding</keyword>
<keyword id="KW-0547">Nucleotide-binding</keyword>
<keyword id="KW-0548">Nucleotidyltransferase</keyword>
<keyword id="KW-1185">Reference proteome</keyword>
<keyword id="KW-0696">RNA-directed RNA polymerase</keyword>
<keyword id="KW-0808">Transferase</keyword>
<keyword id="KW-0693">Viral RNA replication</keyword>
<keyword id="KW-0946">Virion</keyword>
<organism>
    <name type="scientific">Rice stripe virus (isolate T)</name>
    <name type="common">RSV</name>
    <dbReference type="NCBI Taxonomy" id="36394"/>
    <lineage>
        <taxon>Viruses</taxon>
        <taxon>Riboviria</taxon>
        <taxon>Orthornavirae</taxon>
        <taxon>Negarnaviricota</taxon>
        <taxon>Polyploviricotina</taxon>
        <taxon>Ellioviricetes</taxon>
        <taxon>Bunyavirales</taxon>
        <taxon>Phenuiviridae</taxon>
        <taxon>Tenuivirus</taxon>
        <taxon>Tenuivirus oryzaclavatae</taxon>
    </lineage>
</organism>
<accession>Q85431</accession>